<keyword id="KW-0066">ATP synthesis</keyword>
<keyword id="KW-1003">Cell membrane</keyword>
<keyword id="KW-0138">CF(0)</keyword>
<keyword id="KW-0375">Hydrogen ion transport</keyword>
<keyword id="KW-0406">Ion transport</keyword>
<keyword id="KW-0446">Lipid-binding</keyword>
<keyword id="KW-0472">Membrane</keyword>
<keyword id="KW-1185">Reference proteome</keyword>
<keyword id="KW-0812">Transmembrane</keyword>
<keyword id="KW-1133">Transmembrane helix</keyword>
<keyword id="KW-0813">Transport</keyword>
<gene>
    <name evidence="1" type="primary">atpE</name>
    <name type="ordered locus">TTE0631</name>
</gene>
<feature type="chain" id="PRO_0000365933" description="ATP synthase subunit c">
    <location>
        <begin position="1"/>
        <end position="73"/>
    </location>
</feature>
<feature type="transmembrane region" description="Helical" evidence="1">
    <location>
        <begin position="4"/>
        <end position="24"/>
    </location>
</feature>
<feature type="transmembrane region" description="Helical" evidence="1">
    <location>
        <begin position="51"/>
        <end position="71"/>
    </location>
</feature>
<feature type="site" description="Reversibly protonated during proton transport" evidence="1">
    <location>
        <position position="55"/>
    </location>
</feature>
<accession>Q8R5T5</accession>
<name>ATPL_CALS4</name>
<organism>
    <name type="scientific">Caldanaerobacter subterraneus subsp. tengcongensis (strain DSM 15242 / JCM 11007 / NBRC 100824 / MB4)</name>
    <name type="common">Thermoanaerobacter tengcongensis</name>
    <dbReference type="NCBI Taxonomy" id="273068"/>
    <lineage>
        <taxon>Bacteria</taxon>
        <taxon>Bacillati</taxon>
        <taxon>Bacillota</taxon>
        <taxon>Clostridia</taxon>
        <taxon>Thermoanaerobacterales</taxon>
        <taxon>Thermoanaerobacteraceae</taxon>
        <taxon>Caldanaerobacter</taxon>
    </lineage>
</organism>
<proteinExistence type="inferred from homology"/>
<sequence length="73" mass="7159">MNLLAIGAAIAALTGIGAGVGIGIATGKAVEAVSRQPEASGKIMQLLLLGGALAEATAIYGLLVAIMIIIFKP</sequence>
<comment type="function">
    <text evidence="1">F(1)F(0) ATP synthase produces ATP from ADP in the presence of a proton or sodium gradient. F-type ATPases consist of two structural domains, F(1) containing the extramembraneous catalytic core and F(0) containing the membrane proton channel, linked together by a central stalk and a peripheral stalk. During catalysis, ATP synthesis in the catalytic domain of F(1) is coupled via a rotary mechanism of the central stalk subunits to proton translocation.</text>
</comment>
<comment type="function">
    <text evidence="1">Key component of the F(0) channel; it plays a direct role in translocation across the membrane. A homomeric c-ring of between 10-14 subunits forms the central stalk rotor element with the F(1) delta and epsilon subunits.</text>
</comment>
<comment type="subunit">
    <text evidence="1">F-type ATPases have 2 components, F(1) - the catalytic core - and F(0) - the membrane proton channel. F(1) has five subunits: alpha(3), beta(3), gamma(1), delta(1), epsilon(1). F(0) has three main subunits: a(1), b(2) and c(10-14). The alpha and beta chains form an alternating ring which encloses part of the gamma chain. F(1) is attached to F(0) by a central stalk formed by the gamma and epsilon chains, while a peripheral stalk is formed by the delta and b chains.</text>
</comment>
<comment type="subcellular location">
    <subcellularLocation>
        <location evidence="1">Cell membrane</location>
        <topology evidence="1">Multi-pass membrane protein</topology>
    </subcellularLocation>
</comment>
<comment type="similarity">
    <text evidence="1">Belongs to the ATPase C chain family.</text>
</comment>
<evidence type="ECO:0000255" key="1">
    <source>
        <dbReference type="HAMAP-Rule" id="MF_01396"/>
    </source>
</evidence>
<dbReference type="EMBL" id="AE008691">
    <property type="protein sequence ID" value="AAM23900.1"/>
    <property type="molecule type" value="Genomic_DNA"/>
</dbReference>
<dbReference type="RefSeq" id="WP_011025043.1">
    <property type="nucleotide sequence ID" value="NC_003869.1"/>
</dbReference>
<dbReference type="SMR" id="Q8R5T5"/>
<dbReference type="STRING" id="273068.TTE0631"/>
<dbReference type="KEGG" id="tte:TTE0631"/>
<dbReference type="eggNOG" id="COG0636">
    <property type="taxonomic scope" value="Bacteria"/>
</dbReference>
<dbReference type="HOGENOM" id="CLU_148047_2_1_9"/>
<dbReference type="Proteomes" id="UP000000555">
    <property type="component" value="Chromosome"/>
</dbReference>
<dbReference type="GO" id="GO:0005886">
    <property type="term" value="C:plasma membrane"/>
    <property type="evidence" value="ECO:0007669"/>
    <property type="project" value="UniProtKB-SubCell"/>
</dbReference>
<dbReference type="GO" id="GO:0045259">
    <property type="term" value="C:proton-transporting ATP synthase complex"/>
    <property type="evidence" value="ECO:0007669"/>
    <property type="project" value="UniProtKB-KW"/>
</dbReference>
<dbReference type="GO" id="GO:0033177">
    <property type="term" value="C:proton-transporting two-sector ATPase complex, proton-transporting domain"/>
    <property type="evidence" value="ECO:0007669"/>
    <property type="project" value="InterPro"/>
</dbReference>
<dbReference type="GO" id="GO:0008289">
    <property type="term" value="F:lipid binding"/>
    <property type="evidence" value="ECO:0007669"/>
    <property type="project" value="UniProtKB-KW"/>
</dbReference>
<dbReference type="GO" id="GO:0046933">
    <property type="term" value="F:proton-transporting ATP synthase activity, rotational mechanism"/>
    <property type="evidence" value="ECO:0007669"/>
    <property type="project" value="UniProtKB-UniRule"/>
</dbReference>
<dbReference type="Gene3D" id="1.20.120.610">
    <property type="entry name" value="lithium bound rotor ring of v- atpase"/>
    <property type="match status" value="1"/>
</dbReference>
<dbReference type="HAMAP" id="MF_01396">
    <property type="entry name" value="ATP_synth_c_bact"/>
    <property type="match status" value="1"/>
</dbReference>
<dbReference type="InterPro" id="IPR005953">
    <property type="entry name" value="ATP_synth_csu_bac/chlpt"/>
</dbReference>
<dbReference type="InterPro" id="IPR000454">
    <property type="entry name" value="ATP_synth_F0_csu"/>
</dbReference>
<dbReference type="InterPro" id="IPR020537">
    <property type="entry name" value="ATP_synth_F0_csu_DDCD_BS"/>
</dbReference>
<dbReference type="InterPro" id="IPR002379">
    <property type="entry name" value="ATPase_proteolipid_c-like_dom"/>
</dbReference>
<dbReference type="InterPro" id="IPR035921">
    <property type="entry name" value="F/V-ATP_Csub_sf"/>
</dbReference>
<dbReference type="NCBIfam" id="TIGR01260">
    <property type="entry name" value="ATP_synt_c"/>
    <property type="match status" value="1"/>
</dbReference>
<dbReference type="PANTHER" id="PTHR10031">
    <property type="entry name" value="ATP SYNTHASE LIPID-BINDING PROTEIN, MITOCHONDRIAL"/>
    <property type="match status" value="1"/>
</dbReference>
<dbReference type="PANTHER" id="PTHR10031:SF0">
    <property type="entry name" value="ATPASE PROTEIN 9"/>
    <property type="match status" value="1"/>
</dbReference>
<dbReference type="Pfam" id="PF00137">
    <property type="entry name" value="ATP-synt_C"/>
    <property type="match status" value="1"/>
</dbReference>
<dbReference type="PRINTS" id="PR00124">
    <property type="entry name" value="ATPASEC"/>
</dbReference>
<dbReference type="SUPFAM" id="SSF81333">
    <property type="entry name" value="F1F0 ATP synthase subunit C"/>
    <property type="match status" value="1"/>
</dbReference>
<dbReference type="PROSITE" id="PS00605">
    <property type="entry name" value="ATPASE_C"/>
    <property type="match status" value="1"/>
</dbReference>
<reference key="1">
    <citation type="journal article" date="2002" name="Genome Res.">
        <title>A complete sequence of the T. tengcongensis genome.</title>
        <authorList>
            <person name="Bao Q."/>
            <person name="Tian Y."/>
            <person name="Li W."/>
            <person name="Xu Z."/>
            <person name="Xuan Z."/>
            <person name="Hu S."/>
            <person name="Dong W."/>
            <person name="Yang J."/>
            <person name="Chen Y."/>
            <person name="Xue Y."/>
            <person name="Xu Y."/>
            <person name="Lai X."/>
            <person name="Huang L."/>
            <person name="Dong X."/>
            <person name="Ma Y."/>
            <person name="Ling L."/>
            <person name="Tan H."/>
            <person name="Chen R."/>
            <person name="Wang J."/>
            <person name="Yu J."/>
            <person name="Yang H."/>
        </authorList>
    </citation>
    <scope>NUCLEOTIDE SEQUENCE [LARGE SCALE GENOMIC DNA]</scope>
    <source>
        <strain>DSM 15242 / JCM 11007 / NBRC 100824 / MB4</strain>
    </source>
</reference>
<protein>
    <recommendedName>
        <fullName evidence="1">ATP synthase subunit c</fullName>
    </recommendedName>
    <alternativeName>
        <fullName evidence="1">ATP synthase F(0) sector subunit c</fullName>
    </alternativeName>
    <alternativeName>
        <fullName evidence="1">F-type ATPase subunit c</fullName>
        <shortName evidence="1">F-ATPase subunit c</shortName>
    </alternativeName>
    <alternativeName>
        <fullName evidence="1">Lipid-binding protein</fullName>
    </alternativeName>
</protein>